<accession>Q9T035</accession>
<feature type="chain" id="PRO_0000283255" description="Putative F-box/kelch-repeat protein At4g39290">
    <location>
        <begin position="1"/>
        <end position="365"/>
    </location>
</feature>
<feature type="domain" description="F-box">
    <location>
        <begin position="10"/>
        <end position="58"/>
    </location>
</feature>
<feature type="repeat" description="Kelch 1">
    <location>
        <begin position="118"/>
        <end position="165"/>
    </location>
</feature>
<feature type="repeat" description="Kelch 2">
    <location>
        <begin position="167"/>
        <end position="213"/>
    </location>
</feature>
<protein>
    <recommendedName>
        <fullName>Putative F-box/kelch-repeat protein At4g39290</fullName>
    </recommendedName>
</protein>
<keyword id="KW-0880">Kelch repeat</keyword>
<keyword id="KW-1185">Reference proteome</keyword>
<keyword id="KW-0677">Repeat</keyword>
<organism>
    <name type="scientific">Arabidopsis thaliana</name>
    <name type="common">Mouse-ear cress</name>
    <dbReference type="NCBI Taxonomy" id="3702"/>
    <lineage>
        <taxon>Eukaryota</taxon>
        <taxon>Viridiplantae</taxon>
        <taxon>Streptophyta</taxon>
        <taxon>Embryophyta</taxon>
        <taxon>Tracheophyta</taxon>
        <taxon>Spermatophyta</taxon>
        <taxon>Magnoliopsida</taxon>
        <taxon>eudicotyledons</taxon>
        <taxon>Gunneridae</taxon>
        <taxon>Pentapetalae</taxon>
        <taxon>rosids</taxon>
        <taxon>malvids</taxon>
        <taxon>Brassicales</taxon>
        <taxon>Brassicaceae</taxon>
        <taxon>Camelineae</taxon>
        <taxon>Arabidopsis</taxon>
    </lineage>
</organism>
<dbReference type="EMBL" id="AL050351">
    <property type="protein sequence ID" value="CAB43644.1"/>
    <property type="molecule type" value="Genomic_DNA"/>
</dbReference>
<dbReference type="EMBL" id="AL161595">
    <property type="protein sequence ID" value="CAB80592.1"/>
    <property type="molecule type" value="Genomic_DNA"/>
</dbReference>
<dbReference type="EMBL" id="CP002687">
    <property type="protein sequence ID" value="AEE87052.1"/>
    <property type="molecule type" value="Genomic_DNA"/>
</dbReference>
<dbReference type="PIR" id="T08577">
    <property type="entry name" value="T08577"/>
</dbReference>
<dbReference type="RefSeq" id="NP_195640.1">
    <property type="nucleotide sequence ID" value="NM_120090.1"/>
</dbReference>
<dbReference type="SMR" id="Q9T035"/>
<dbReference type="BioGRID" id="15365">
    <property type="interactions" value="1"/>
</dbReference>
<dbReference type="PaxDb" id="3702-AT4G39290.1"/>
<dbReference type="EnsemblPlants" id="AT4G39290.1">
    <property type="protein sequence ID" value="AT4G39290.1"/>
    <property type="gene ID" value="AT4G39290"/>
</dbReference>
<dbReference type="GeneID" id="830085"/>
<dbReference type="Gramene" id="AT4G39290.1">
    <property type="protein sequence ID" value="AT4G39290.1"/>
    <property type="gene ID" value="AT4G39290"/>
</dbReference>
<dbReference type="KEGG" id="ath:AT4G39290"/>
<dbReference type="Araport" id="AT4G39290"/>
<dbReference type="TAIR" id="AT4G39290"/>
<dbReference type="eggNOG" id="KOG1072">
    <property type="taxonomic scope" value="Eukaryota"/>
</dbReference>
<dbReference type="HOGENOM" id="CLU_032521_1_2_1"/>
<dbReference type="InParanoid" id="Q9T035"/>
<dbReference type="OMA" id="WIEVFDT"/>
<dbReference type="OrthoDB" id="45365at2759"/>
<dbReference type="PhylomeDB" id="Q9T035"/>
<dbReference type="PRO" id="PR:Q9T035"/>
<dbReference type="Proteomes" id="UP000006548">
    <property type="component" value="Chromosome 4"/>
</dbReference>
<dbReference type="ExpressionAtlas" id="Q9T035">
    <property type="expression patterns" value="baseline and differential"/>
</dbReference>
<dbReference type="CDD" id="cd22152">
    <property type="entry name" value="F-box_AtAFR-like"/>
    <property type="match status" value="1"/>
</dbReference>
<dbReference type="Gene3D" id="2.120.10.80">
    <property type="entry name" value="Kelch-type beta propeller"/>
    <property type="match status" value="1"/>
</dbReference>
<dbReference type="InterPro" id="IPR036047">
    <property type="entry name" value="F-box-like_dom_sf"/>
</dbReference>
<dbReference type="InterPro" id="IPR050354">
    <property type="entry name" value="F-box/kelch-repeat_ARATH"/>
</dbReference>
<dbReference type="InterPro" id="IPR001810">
    <property type="entry name" value="F-box_dom"/>
</dbReference>
<dbReference type="InterPro" id="IPR015915">
    <property type="entry name" value="Kelch-typ_b-propeller"/>
</dbReference>
<dbReference type="InterPro" id="IPR006652">
    <property type="entry name" value="Kelch_1"/>
</dbReference>
<dbReference type="PANTHER" id="PTHR24414">
    <property type="entry name" value="F-BOX/KELCH-REPEAT PROTEIN SKIP4"/>
    <property type="match status" value="1"/>
</dbReference>
<dbReference type="PANTHER" id="PTHR24414:SF184">
    <property type="entry name" value="GALACTOSE OXIDASE_KELCH REPEAT SUPERFAMILY PROTEIN"/>
    <property type="match status" value="1"/>
</dbReference>
<dbReference type="Pfam" id="PF00646">
    <property type="entry name" value="F-box"/>
    <property type="match status" value="1"/>
</dbReference>
<dbReference type="Pfam" id="PF25210">
    <property type="entry name" value="Kelch_FKB95"/>
    <property type="match status" value="1"/>
</dbReference>
<dbReference type="SMART" id="SM00256">
    <property type="entry name" value="FBOX"/>
    <property type="match status" value="1"/>
</dbReference>
<dbReference type="SMART" id="SM00612">
    <property type="entry name" value="Kelch"/>
    <property type="match status" value="2"/>
</dbReference>
<dbReference type="SUPFAM" id="SSF81383">
    <property type="entry name" value="F-box domain"/>
    <property type="match status" value="1"/>
</dbReference>
<dbReference type="SUPFAM" id="SSF117281">
    <property type="entry name" value="Kelch motif"/>
    <property type="match status" value="1"/>
</dbReference>
<name>FBK97_ARATH</name>
<gene>
    <name type="ordered locus">At4g39290</name>
    <name type="ORF">T22F8.190</name>
</gene>
<sequence length="365" mass="42173">MLMSKEDESQMTFSMLPDDLVLNCLARVSKVYYPSLSFVSKKFRSLIASTELQELRSFLGCTSSGLYVCLRFRTNTDYRQICFTLRQKISSSAKILVPISSLDSPFDYRSGVVAVGSDIYAIGGRNLNNSASSKVMVMDCRSHTWREAPSMRVARDDFPSTCVLNGKIYVIGGCKNLDSTNWIEVFDTKTQTWEFLQIPNEEVCRGFNYKIVGYKEAIHVSSLENNRATFMTYEIHKGRWREPHLSLSHGFHFSNCVIENVFYRYSYEMLQWYDSCRKIWKNLKGFVRRSIMNPRGEGVKMVNYGGNIVLLWEECVTIKKKLIWCEEVVIEKKHQGEIWGLLKWSDVVFITDEKNQLVRALAPDV</sequence>
<proteinExistence type="predicted"/>
<reference key="1">
    <citation type="journal article" date="1999" name="Nature">
        <title>Sequence and analysis of chromosome 4 of the plant Arabidopsis thaliana.</title>
        <authorList>
            <person name="Mayer K.F.X."/>
            <person name="Schueller C."/>
            <person name="Wambutt R."/>
            <person name="Murphy G."/>
            <person name="Volckaert G."/>
            <person name="Pohl T."/>
            <person name="Duesterhoeft A."/>
            <person name="Stiekema W."/>
            <person name="Entian K.-D."/>
            <person name="Terryn N."/>
            <person name="Harris B."/>
            <person name="Ansorge W."/>
            <person name="Brandt P."/>
            <person name="Grivell L.A."/>
            <person name="Rieger M."/>
            <person name="Weichselgartner M."/>
            <person name="de Simone V."/>
            <person name="Obermaier B."/>
            <person name="Mache R."/>
            <person name="Mueller M."/>
            <person name="Kreis M."/>
            <person name="Delseny M."/>
            <person name="Puigdomenech P."/>
            <person name="Watson M."/>
            <person name="Schmidtheini T."/>
            <person name="Reichert B."/>
            <person name="Portetelle D."/>
            <person name="Perez-Alonso M."/>
            <person name="Boutry M."/>
            <person name="Bancroft I."/>
            <person name="Vos P."/>
            <person name="Hoheisel J."/>
            <person name="Zimmermann W."/>
            <person name="Wedler H."/>
            <person name="Ridley P."/>
            <person name="Langham S.-A."/>
            <person name="McCullagh B."/>
            <person name="Bilham L."/>
            <person name="Robben J."/>
            <person name="van der Schueren J."/>
            <person name="Grymonprez B."/>
            <person name="Chuang Y.-J."/>
            <person name="Vandenbussche F."/>
            <person name="Braeken M."/>
            <person name="Weltjens I."/>
            <person name="Voet M."/>
            <person name="Bastiaens I."/>
            <person name="Aert R."/>
            <person name="Defoor E."/>
            <person name="Weitzenegger T."/>
            <person name="Bothe G."/>
            <person name="Ramsperger U."/>
            <person name="Hilbert H."/>
            <person name="Braun M."/>
            <person name="Holzer E."/>
            <person name="Brandt A."/>
            <person name="Peters S."/>
            <person name="van Staveren M."/>
            <person name="Dirkse W."/>
            <person name="Mooijman P."/>
            <person name="Klein Lankhorst R."/>
            <person name="Rose M."/>
            <person name="Hauf J."/>
            <person name="Koetter P."/>
            <person name="Berneiser S."/>
            <person name="Hempel S."/>
            <person name="Feldpausch M."/>
            <person name="Lamberth S."/>
            <person name="Van den Daele H."/>
            <person name="De Keyser A."/>
            <person name="Buysshaert C."/>
            <person name="Gielen J."/>
            <person name="Villarroel R."/>
            <person name="De Clercq R."/>
            <person name="van Montagu M."/>
            <person name="Rogers J."/>
            <person name="Cronin A."/>
            <person name="Quail M.A."/>
            <person name="Bray-Allen S."/>
            <person name="Clark L."/>
            <person name="Doggett J."/>
            <person name="Hall S."/>
            <person name="Kay M."/>
            <person name="Lennard N."/>
            <person name="McLay K."/>
            <person name="Mayes R."/>
            <person name="Pettett A."/>
            <person name="Rajandream M.A."/>
            <person name="Lyne M."/>
            <person name="Benes V."/>
            <person name="Rechmann S."/>
            <person name="Borkova D."/>
            <person name="Bloecker H."/>
            <person name="Scharfe M."/>
            <person name="Grimm M."/>
            <person name="Loehnert T.-H."/>
            <person name="Dose S."/>
            <person name="de Haan M."/>
            <person name="Maarse A.C."/>
            <person name="Schaefer M."/>
            <person name="Mueller-Auer S."/>
            <person name="Gabel C."/>
            <person name="Fuchs M."/>
            <person name="Fartmann B."/>
            <person name="Granderath K."/>
            <person name="Dauner D."/>
            <person name="Herzl A."/>
            <person name="Neumann S."/>
            <person name="Argiriou A."/>
            <person name="Vitale D."/>
            <person name="Liguori R."/>
            <person name="Piravandi E."/>
            <person name="Massenet O."/>
            <person name="Quigley F."/>
            <person name="Clabauld G."/>
            <person name="Muendlein A."/>
            <person name="Felber R."/>
            <person name="Schnabl S."/>
            <person name="Hiller R."/>
            <person name="Schmidt W."/>
            <person name="Lecharny A."/>
            <person name="Aubourg S."/>
            <person name="Chefdor F."/>
            <person name="Cooke R."/>
            <person name="Berger C."/>
            <person name="Monfort A."/>
            <person name="Casacuberta E."/>
            <person name="Gibbons T."/>
            <person name="Weber N."/>
            <person name="Vandenbol M."/>
            <person name="Bargues M."/>
            <person name="Terol J."/>
            <person name="Torres A."/>
            <person name="Perez-Perez A."/>
            <person name="Purnelle B."/>
            <person name="Bent E."/>
            <person name="Johnson S."/>
            <person name="Tacon D."/>
            <person name="Jesse T."/>
            <person name="Heijnen L."/>
            <person name="Schwarz S."/>
            <person name="Scholler P."/>
            <person name="Heber S."/>
            <person name="Francs P."/>
            <person name="Bielke C."/>
            <person name="Frishman D."/>
            <person name="Haase D."/>
            <person name="Lemcke K."/>
            <person name="Mewes H.-W."/>
            <person name="Stocker S."/>
            <person name="Zaccaria P."/>
            <person name="Bevan M."/>
            <person name="Wilson R.K."/>
            <person name="de la Bastide M."/>
            <person name="Habermann K."/>
            <person name="Parnell L."/>
            <person name="Dedhia N."/>
            <person name="Gnoj L."/>
            <person name="Schutz K."/>
            <person name="Huang E."/>
            <person name="Spiegel L."/>
            <person name="Sekhon M."/>
            <person name="Murray J."/>
            <person name="Sheet P."/>
            <person name="Cordes M."/>
            <person name="Abu-Threideh J."/>
            <person name="Stoneking T."/>
            <person name="Kalicki J."/>
            <person name="Graves T."/>
            <person name="Harmon G."/>
            <person name="Edwards J."/>
            <person name="Latreille P."/>
            <person name="Courtney L."/>
            <person name="Cloud J."/>
            <person name="Abbott A."/>
            <person name="Scott K."/>
            <person name="Johnson D."/>
            <person name="Minx P."/>
            <person name="Bentley D."/>
            <person name="Fulton B."/>
            <person name="Miller N."/>
            <person name="Greco T."/>
            <person name="Kemp K."/>
            <person name="Kramer J."/>
            <person name="Fulton L."/>
            <person name="Mardis E."/>
            <person name="Dante M."/>
            <person name="Pepin K."/>
            <person name="Hillier L.W."/>
            <person name="Nelson J."/>
            <person name="Spieth J."/>
            <person name="Ryan E."/>
            <person name="Andrews S."/>
            <person name="Geisel C."/>
            <person name="Layman D."/>
            <person name="Du H."/>
            <person name="Ali J."/>
            <person name="Berghoff A."/>
            <person name="Jones K."/>
            <person name="Drone K."/>
            <person name="Cotton M."/>
            <person name="Joshu C."/>
            <person name="Antonoiu B."/>
            <person name="Zidanic M."/>
            <person name="Strong C."/>
            <person name="Sun H."/>
            <person name="Lamar B."/>
            <person name="Yordan C."/>
            <person name="Ma P."/>
            <person name="Zhong J."/>
            <person name="Preston R."/>
            <person name="Vil D."/>
            <person name="Shekher M."/>
            <person name="Matero A."/>
            <person name="Shah R."/>
            <person name="Swaby I.K."/>
            <person name="O'Shaughnessy A."/>
            <person name="Rodriguez M."/>
            <person name="Hoffman J."/>
            <person name="Till S."/>
            <person name="Granat S."/>
            <person name="Shohdy N."/>
            <person name="Hasegawa A."/>
            <person name="Hameed A."/>
            <person name="Lodhi M."/>
            <person name="Johnson A."/>
            <person name="Chen E."/>
            <person name="Marra M.A."/>
            <person name="Martienssen R."/>
            <person name="McCombie W.R."/>
        </authorList>
    </citation>
    <scope>NUCLEOTIDE SEQUENCE [LARGE SCALE GENOMIC DNA]</scope>
    <source>
        <strain>cv. Columbia</strain>
    </source>
</reference>
<reference key="2">
    <citation type="journal article" date="2017" name="Plant J.">
        <title>Araport11: a complete reannotation of the Arabidopsis thaliana reference genome.</title>
        <authorList>
            <person name="Cheng C.Y."/>
            <person name="Krishnakumar V."/>
            <person name="Chan A.P."/>
            <person name="Thibaud-Nissen F."/>
            <person name="Schobel S."/>
            <person name="Town C.D."/>
        </authorList>
    </citation>
    <scope>GENOME REANNOTATION</scope>
    <source>
        <strain>cv. Columbia</strain>
    </source>
</reference>